<gene>
    <name evidence="1" type="primary">rpl2</name>
    <name type="ordered locus">Mevan_0860</name>
</gene>
<evidence type="ECO:0000255" key="1">
    <source>
        <dbReference type="HAMAP-Rule" id="MF_01320"/>
    </source>
</evidence>
<evidence type="ECO:0000256" key="2">
    <source>
        <dbReference type="SAM" id="MobiDB-lite"/>
    </source>
</evidence>
<evidence type="ECO:0000305" key="3"/>
<proteinExistence type="inferred from homology"/>
<name>RL2_METVS</name>
<feature type="chain" id="PRO_1000051939" description="Large ribosomal subunit protein uL2">
    <location>
        <begin position="1"/>
        <end position="240"/>
    </location>
</feature>
<feature type="region of interest" description="Disordered" evidence="2">
    <location>
        <begin position="1"/>
        <end position="26"/>
    </location>
</feature>
<feature type="region of interest" description="Disordered" evidence="2">
    <location>
        <begin position="206"/>
        <end position="240"/>
    </location>
</feature>
<feature type="compositionally biased region" description="Polar residues" evidence="2">
    <location>
        <begin position="1"/>
        <end position="11"/>
    </location>
</feature>
<feature type="compositionally biased region" description="Basic residues" evidence="2">
    <location>
        <begin position="13"/>
        <end position="26"/>
    </location>
</feature>
<feature type="compositionally biased region" description="Basic residues" evidence="2">
    <location>
        <begin position="228"/>
        <end position="240"/>
    </location>
</feature>
<protein>
    <recommendedName>
        <fullName evidence="1">Large ribosomal subunit protein uL2</fullName>
    </recommendedName>
    <alternativeName>
        <fullName evidence="3">50S ribosomal protein L2</fullName>
    </alternativeName>
</protein>
<organism>
    <name type="scientific">Methanococcus vannielii (strain ATCC 35089 / DSM 1224 / JCM 13029 / OCM 148 / SB)</name>
    <dbReference type="NCBI Taxonomy" id="406327"/>
    <lineage>
        <taxon>Archaea</taxon>
        <taxon>Methanobacteriati</taxon>
        <taxon>Methanobacteriota</taxon>
        <taxon>Methanomada group</taxon>
        <taxon>Methanococci</taxon>
        <taxon>Methanococcales</taxon>
        <taxon>Methanococcaceae</taxon>
        <taxon>Methanococcus</taxon>
    </lineage>
</organism>
<keyword id="KW-0687">Ribonucleoprotein</keyword>
<keyword id="KW-0689">Ribosomal protein</keyword>
<keyword id="KW-0694">RNA-binding</keyword>
<keyword id="KW-0699">rRNA-binding</keyword>
<reference key="1">
    <citation type="submission" date="2007-06" db="EMBL/GenBank/DDBJ databases">
        <title>Complete sequence of Methanococcus vannielii SB.</title>
        <authorList>
            <consortium name="US DOE Joint Genome Institute"/>
            <person name="Copeland A."/>
            <person name="Lucas S."/>
            <person name="Lapidus A."/>
            <person name="Barry K."/>
            <person name="Glavina del Rio T."/>
            <person name="Dalin E."/>
            <person name="Tice H."/>
            <person name="Pitluck S."/>
            <person name="Chain P."/>
            <person name="Malfatti S."/>
            <person name="Shin M."/>
            <person name="Vergez L."/>
            <person name="Schmutz J."/>
            <person name="Larimer F."/>
            <person name="Land M."/>
            <person name="Hauser L."/>
            <person name="Kyrpides N."/>
            <person name="Anderson I."/>
            <person name="Sieprawska-Lupa M."/>
            <person name="Whitman W.B."/>
            <person name="Richardson P."/>
        </authorList>
    </citation>
    <scope>NUCLEOTIDE SEQUENCE [LARGE SCALE GENOMIC DNA]</scope>
    <source>
        <strain>ATCC 35089 / DSM 1224 / JCM 13029 / OCM 148 / SB</strain>
    </source>
</reference>
<dbReference type="EMBL" id="CP000742">
    <property type="protein sequence ID" value="ABR54765.1"/>
    <property type="molecule type" value="Genomic_DNA"/>
</dbReference>
<dbReference type="RefSeq" id="WP_011972666.1">
    <property type="nucleotide sequence ID" value="NC_009634.1"/>
</dbReference>
<dbReference type="SMR" id="A6UQJ3"/>
<dbReference type="STRING" id="406327.Mevan_0860"/>
<dbReference type="GeneID" id="5324904"/>
<dbReference type="KEGG" id="mvn:Mevan_0860"/>
<dbReference type="eggNOG" id="arCOG04067">
    <property type="taxonomic scope" value="Archaea"/>
</dbReference>
<dbReference type="HOGENOM" id="CLU_036235_0_1_2"/>
<dbReference type="OrthoDB" id="5987at2157"/>
<dbReference type="Proteomes" id="UP000001107">
    <property type="component" value="Chromosome"/>
</dbReference>
<dbReference type="GO" id="GO:0022625">
    <property type="term" value="C:cytosolic large ribosomal subunit"/>
    <property type="evidence" value="ECO:0007669"/>
    <property type="project" value="TreeGrafter"/>
</dbReference>
<dbReference type="GO" id="GO:0019843">
    <property type="term" value="F:rRNA binding"/>
    <property type="evidence" value="ECO:0007669"/>
    <property type="project" value="UniProtKB-UniRule"/>
</dbReference>
<dbReference type="GO" id="GO:0003735">
    <property type="term" value="F:structural constituent of ribosome"/>
    <property type="evidence" value="ECO:0007669"/>
    <property type="project" value="InterPro"/>
</dbReference>
<dbReference type="GO" id="GO:0002181">
    <property type="term" value="P:cytoplasmic translation"/>
    <property type="evidence" value="ECO:0007669"/>
    <property type="project" value="TreeGrafter"/>
</dbReference>
<dbReference type="FunFam" id="2.40.50.140:FF:000020">
    <property type="entry name" value="60S ribosomal protein L2"/>
    <property type="match status" value="1"/>
</dbReference>
<dbReference type="FunFam" id="4.10.950.10:FF:000002">
    <property type="entry name" value="60S ribosomal protein L2"/>
    <property type="match status" value="1"/>
</dbReference>
<dbReference type="FunFam" id="2.30.30.30:FF:000006">
    <property type="entry name" value="60S ribosomal protein L8"/>
    <property type="match status" value="1"/>
</dbReference>
<dbReference type="Gene3D" id="2.30.30.30">
    <property type="match status" value="1"/>
</dbReference>
<dbReference type="Gene3D" id="2.40.50.140">
    <property type="entry name" value="Nucleic acid-binding proteins"/>
    <property type="match status" value="1"/>
</dbReference>
<dbReference type="Gene3D" id="4.10.950.10">
    <property type="entry name" value="Ribosomal protein L2, domain 3"/>
    <property type="match status" value="1"/>
</dbReference>
<dbReference type="HAMAP" id="MF_01320_A">
    <property type="entry name" value="Ribosomal_uL2_A"/>
    <property type="match status" value="1"/>
</dbReference>
<dbReference type="InterPro" id="IPR012340">
    <property type="entry name" value="NA-bd_OB-fold"/>
</dbReference>
<dbReference type="InterPro" id="IPR014722">
    <property type="entry name" value="Rib_uL2_dom2"/>
</dbReference>
<dbReference type="InterPro" id="IPR002171">
    <property type="entry name" value="Ribosomal_uL2"/>
</dbReference>
<dbReference type="InterPro" id="IPR023672">
    <property type="entry name" value="Ribosomal_uL2_arc_euk"/>
</dbReference>
<dbReference type="InterPro" id="IPR022669">
    <property type="entry name" value="Ribosomal_uL2_C"/>
</dbReference>
<dbReference type="InterPro" id="IPR022671">
    <property type="entry name" value="Ribosomal_uL2_CS"/>
</dbReference>
<dbReference type="InterPro" id="IPR014726">
    <property type="entry name" value="Ribosomal_uL2_dom3"/>
</dbReference>
<dbReference type="InterPro" id="IPR022666">
    <property type="entry name" value="Ribosomal_uL2_RNA-bd_dom"/>
</dbReference>
<dbReference type="InterPro" id="IPR008991">
    <property type="entry name" value="Translation_prot_SH3-like_sf"/>
</dbReference>
<dbReference type="NCBIfam" id="NF007180">
    <property type="entry name" value="PRK09612.1"/>
    <property type="match status" value="1"/>
</dbReference>
<dbReference type="PANTHER" id="PTHR13691:SF16">
    <property type="entry name" value="LARGE RIBOSOMAL SUBUNIT PROTEIN UL2"/>
    <property type="match status" value="1"/>
</dbReference>
<dbReference type="PANTHER" id="PTHR13691">
    <property type="entry name" value="RIBOSOMAL PROTEIN L2"/>
    <property type="match status" value="1"/>
</dbReference>
<dbReference type="Pfam" id="PF00181">
    <property type="entry name" value="Ribosomal_L2"/>
    <property type="match status" value="1"/>
</dbReference>
<dbReference type="Pfam" id="PF03947">
    <property type="entry name" value="Ribosomal_L2_C"/>
    <property type="match status" value="1"/>
</dbReference>
<dbReference type="PIRSF" id="PIRSF002158">
    <property type="entry name" value="Ribosomal_L2"/>
    <property type="match status" value="1"/>
</dbReference>
<dbReference type="SMART" id="SM01383">
    <property type="entry name" value="Ribosomal_L2"/>
    <property type="match status" value="1"/>
</dbReference>
<dbReference type="SMART" id="SM01382">
    <property type="entry name" value="Ribosomal_L2_C"/>
    <property type="match status" value="1"/>
</dbReference>
<dbReference type="SUPFAM" id="SSF50249">
    <property type="entry name" value="Nucleic acid-binding proteins"/>
    <property type="match status" value="1"/>
</dbReference>
<dbReference type="SUPFAM" id="SSF50104">
    <property type="entry name" value="Translation proteins SH3-like domain"/>
    <property type="match status" value="1"/>
</dbReference>
<dbReference type="PROSITE" id="PS00467">
    <property type="entry name" value="RIBOSOMAL_L2"/>
    <property type="match status" value="1"/>
</dbReference>
<comment type="function">
    <text evidence="1">One of the primary rRNA binding proteins. Required for association of the 30S and 50S subunits to form the 70S ribosome, for tRNA binding and peptide bond formation. It has been suggested to have peptidyltransferase activity; this is somewhat controversial. Makes several contacts with the 16S rRNA in the 70S ribosome.</text>
</comment>
<comment type="subunit">
    <text evidence="1">Part of the 50S ribosomal subunit. Forms a bridge to the 30S subunit in the 70S ribosome.</text>
</comment>
<comment type="similarity">
    <text evidence="1">Belongs to the universal ribosomal protein uL2 family.</text>
</comment>
<accession>A6UQJ3</accession>
<sequence length="240" mass="25601">MGKRLISQNRGRGTPKYRSPSHKRKGEVKYRSYDEMEKVGKVLGTVIDVLHDPGRSAPVAKVRFANGEERLVLIPEGISVGEQIECGISAEIKPGNVLPLGEIPEGIPVYNIETIPGDGGKLVRAGGCYAHVVAHDIGKTIVKLPSGYAKVLNPACRATIGVVAGGGRKEKPFVKAGKKHHSLSAKAVAWPKVRGVAMNAVDHPYGGGRHQHLGKPSSVSRNTSPGRKVGHIASRRTGRK</sequence>